<dbReference type="EC" id="4.2.1.20" evidence="1"/>
<dbReference type="EMBL" id="CP000653">
    <property type="protein sequence ID" value="ABP60883.1"/>
    <property type="molecule type" value="Genomic_DNA"/>
</dbReference>
<dbReference type="RefSeq" id="WP_012017598.1">
    <property type="nucleotide sequence ID" value="NC_009436.1"/>
</dbReference>
<dbReference type="SMR" id="A4WB03"/>
<dbReference type="STRING" id="399742.Ent638_2208"/>
<dbReference type="KEGG" id="ent:Ent638_2208"/>
<dbReference type="eggNOG" id="COG0159">
    <property type="taxonomic scope" value="Bacteria"/>
</dbReference>
<dbReference type="HOGENOM" id="CLU_016734_0_4_6"/>
<dbReference type="OrthoDB" id="9804578at2"/>
<dbReference type="UniPathway" id="UPA00035">
    <property type="reaction ID" value="UER00044"/>
</dbReference>
<dbReference type="Proteomes" id="UP000000230">
    <property type="component" value="Chromosome"/>
</dbReference>
<dbReference type="GO" id="GO:0005829">
    <property type="term" value="C:cytosol"/>
    <property type="evidence" value="ECO:0007669"/>
    <property type="project" value="TreeGrafter"/>
</dbReference>
<dbReference type="GO" id="GO:0004834">
    <property type="term" value="F:tryptophan synthase activity"/>
    <property type="evidence" value="ECO:0007669"/>
    <property type="project" value="UniProtKB-UniRule"/>
</dbReference>
<dbReference type="CDD" id="cd04724">
    <property type="entry name" value="Tryptophan_synthase_alpha"/>
    <property type="match status" value="1"/>
</dbReference>
<dbReference type="FunFam" id="3.20.20.70:FF:000037">
    <property type="entry name" value="Tryptophan synthase alpha chain"/>
    <property type="match status" value="1"/>
</dbReference>
<dbReference type="Gene3D" id="3.20.20.70">
    <property type="entry name" value="Aldolase class I"/>
    <property type="match status" value="1"/>
</dbReference>
<dbReference type="HAMAP" id="MF_00131">
    <property type="entry name" value="Trp_synth_alpha"/>
    <property type="match status" value="1"/>
</dbReference>
<dbReference type="InterPro" id="IPR013785">
    <property type="entry name" value="Aldolase_TIM"/>
</dbReference>
<dbReference type="InterPro" id="IPR011060">
    <property type="entry name" value="RibuloseP-bd_barrel"/>
</dbReference>
<dbReference type="InterPro" id="IPR018204">
    <property type="entry name" value="Trp_synthase_alpha_AS"/>
</dbReference>
<dbReference type="InterPro" id="IPR002028">
    <property type="entry name" value="Trp_synthase_suA"/>
</dbReference>
<dbReference type="NCBIfam" id="TIGR00262">
    <property type="entry name" value="trpA"/>
    <property type="match status" value="1"/>
</dbReference>
<dbReference type="PANTHER" id="PTHR43406:SF1">
    <property type="entry name" value="TRYPTOPHAN SYNTHASE ALPHA CHAIN, CHLOROPLASTIC"/>
    <property type="match status" value="1"/>
</dbReference>
<dbReference type="PANTHER" id="PTHR43406">
    <property type="entry name" value="TRYPTOPHAN SYNTHASE, ALPHA CHAIN"/>
    <property type="match status" value="1"/>
</dbReference>
<dbReference type="Pfam" id="PF00290">
    <property type="entry name" value="Trp_syntA"/>
    <property type="match status" value="1"/>
</dbReference>
<dbReference type="SUPFAM" id="SSF51366">
    <property type="entry name" value="Ribulose-phoshate binding barrel"/>
    <property type="match status" value="1"/>
</dbReference>
<dbReference type="PROSITE" id="PS00167">
    <property type="entry name" value="TRP_SYNTHASE_ALPHA"/>
    <property type="match status" value="1"/>
</dbReference>
<keyword id="KW-0028">Amino-acid biosynthesis</keyword>
<keyword id="KW-0057">Aromatic amino acid biosynthesis</keyword>
<keyword id="KW-0456">Lyase</keyword>
<keyword id="KW-0822">Tryptophan biosynthesis</keyword>
<comment type="function">
    <text evidence="1">The alpha subunit is responsible for the aldol cleavage of indoleglycerol phosphate to indole and glyceraldehyde 3-phosphate.</text>
</comment>
<comment type="catalytic activity">
    <reaction evidence="1">
        <text>(1S,2R)-1-C-(indol-3-yl)glycerol 3-phosphate + L-serine = D-glyceraldehyde 3-phosphate + L-tryptophan + H2O</text>
        <dbReference type="Rhea" id="RHEA:10532"/>
        <dbReference type="ChEBI" id="CHEBI:15377"/>
        <dbReference type="ChEBI" id="CHEBI:33384"/>
        <dbReference type="ChEBI" id="CHEBI:57912"/>
        <dbReference type="ChEBI" id="CHEBI:58866"/>
        <dbReference type="ChEBI" id="CHEBI:59776"/>
        <dbReference type="EC" id="4.2.1.20"/>
    </reaction>
</comment>
<comment type="pathway">
    <text evidence="1">Amino-acid biosynthesis; L-tryptophan biosynthesis; L-tryptophan from chorismate: step 5/5.</text>
</comment>
<comment type="subunit">
    <text evidence="1">Tetramer of two alpha and two beta chains.</text>
</comment>
<comment type="similarity">
    <text evidence="1">Belongs to the TrpA family.</text>
</comment>
<gene>
    <name evidence="1" type="primary">trpA</name>
    <name type="ordered locus">Ent638_2208</name>
</gene>
<accession>A4WB03</accession>
<sequence length="269" mass="28916">MERYDNAFTELKARKEGAFVPFVTLGDPGPEQSLKIIDTLIAAGADALELGIPFSDPLADGPTIQSATLRAFASGVTPTQCFEMLATVRQKYPTIPIGLLMYANLVFNRGIDEFYAECARVGVDSVLIADVPIEESAPFRQAAMRHNIAPIFICPPNADDELLRQIASHGRGYTYLLSRAGVTGAENKAAVPLHHLVEKLAEYHAAPPLQGFGISSPEQVTAAIEANAAGAISGSAIVKIIEKNVDKPDQMLTELRDFVTVMKAATRHA</sequence>
<feature type="chain" id="PRO_1000057853" description="Tryptophan synthase alpha chain">
    <location>
        <begin position="1"/>
        <end position="269"/>
    </location>
</feature>
<feature type="active site" description="Proton acceptor" evidence="1">
    <location>
        <position position="49"/>
    </location>
</feature>
<feature type="active site" description="Proton acceptor" evidence="1">
    <location>
        <position position="60"/>
    </location>
</feature>
<organism>
    <name type="scientific">Enterobacter sp. (strain 638)</name>
    <dbReference type="NCBI Taxonomy" id="399742"/>
    <lineage>
        <taxon>Bacteria</taxon>
        <taxon>Pseudomonadati</taxon>
        <taxon>Pseudomonadota</taxon>
        <taxon>Gammaproteobacteria</taxon>
        <taxon>Enterobacterales</taxon>
        <taxon>Enterobacteriaceae</taxon>
        <taxon>Enterobacter</taxon>
    </lineage>
</organism>
<name>TRPA_ENT38</name>
<proteinExistence type="inferred from homology"/>
<evidence type="ECO:0000255" key="1">
    <source>
        <dbReference type="HAMAP-Rule" id="MF_00131"/>
    </source>
</evidence>
<protein>
    <recommendedName>
        <fullName evidence="1">Tryptophan synthase alpha chain</fullName>
        <ecNumber evidence="1">4.2.1.20</ecNumber>
    </recommendedName>
</protein>
<reference key="1">
    <citation type="journal article" date="2010" name="PLoS Genet.">
        <title>Genome sequence of the plant growth promoting endophytic bacterium Enterobacter sp. 638.</title>
        <authorList>
            <person name="Taghavi S."/>
            <person name="van der Lelie D."/>
            <person name="Hoffman A."/>
            <person name="Zhang Y.B."/>
            <person name="Walla M.D."/>
            <person name="Vangronsveld J."/>
            <person name="Newman L."/>
            <person name="Monchy S."/>
        </authorList>
    </citation>
    <scope>NUCLEOTIDE SEQUENCE [LARGE SCALE GENOMIC DNA]</scope>
    <source>
        <strain>638</strain>
    </source>
</reference>